<protein>
    <recommendedName>
        <fullName evidence="2">2-amino-5-formylamino-6-ribosylaminopyrimidin-4(3H)-one 5'-monophosphate deformylase</fullName>
        <shortName evidence="2">FAPy deformylase</shortName>
        <ecNumber evidence="2">3.5.1.102</ecNumber>
    </recommendedName>
    <alternativeName>
        <fullName evidence="2">Formamide hydrolase</fullName>
    </alternativeName>
</protein>
<evidence type="ECO:0000250" key="1"/>
<evidence type="ECO:0000255" key="2">
    <source>
        <dbReference type="HAMAP-Rule" id="MF_02116"/>
    </source>
</evidence>
<accession>D3E3M2</accession>
<name>ARFB_METRM</name>
<dbReference type="EC" id="3.5.1.102" evidence="2"/>
<dbReference type="EMBL" id="CP001719">
    <property type="protein sequence ID" value="ADC47133.1"/>
    <property type="molecule type" value="Genomic_DNA"/>
</dbReference>
<dbReference type="RefSeq" id="WP_012956082.1">
    <property type="nucleotide sequence ID" value="NC_013790.1"/>
</dbReference>
<dbReference type="SMR" id="D3E3M2"/>
<dbReference type="STRING" id="634498.mru_1283"/>
<dbReference type="GeneID" id="8770934"/>
<dbReference type="KEGG" id="mru:mru_1283"/>
<dbReference type="PATRIC" id="fig|634498.28.peg.1286"/>
<dbReference type="eggNOG" id="arCOG04536">
    <property type="taxonomic scope" value="Archaea"/>
</dbReference>
<dbReference type="HOGENOM" id="CLU_1192640_0_0_2"/>
<dbReference type="OrthoDB" id="46121at2157"/>
<dbReference type="UniPathway" id="UPA00071"/>
<dbReference type="UniPathway" id="UPA00275"/>
<dbReference type="Proteomes" id="UP000008680">
    <property type="component" value="Chromosome"/>
</dbReference>
<dbReference type="GO" id="GO:0043729">
    <property type="term" value="F:2-amino-5-formylamino-6-(5-phosphoribosylamino)pyrimidin-4(3H)-one formate-lyase activity"/>
    <property type="evidence" value="ECO:0007669"/>
    <property type="project" value="UniProtKB-EC"/>
</dbReference>
<dbReference type="GO" id="GO:0008198">
    <property type="term" value="F:ferrous iron binding"/>
    <property type="evidence" value="ECO:0007669"/>
    <property type="project" value="UniProtKB-UniRule"/>
</dbReference>
<dbReference type="GO" id="GO:0052645">
    <property type="term" value="P:F420-0 metabolic process"/>
    <property type="evidence" value="ECO:0007669"/>
    <property type="project" value="UniProtKB-UniRule"/>
</dbReference>
<dbReference type="GO" id="GO:0009231">
    <property type="term" value="P:riboflavin biosynthetic process"/>
    <property type="evidence" value="ECO:0007669"/>
    <property type="project" value="UniProtKB-UniRule"/>
</dbReference>
<dbReference type="Gene3D" id="3.40.50.10310">
    <property type="entry name" value="Creatininase"/>
    <property type="match status" value="1"/>
</dbReference>
<dbReference type="HAMAP" id="MF_02116">
    <property type="entry name" value="FAPy_deform"/>
    <property type="match status" value="1"/>
</dbReference>
<dbReference type="InterPro" id="IPR024087">
    <property type="entry name" value="Creatininase-like_sf"/>
</dbReference>
<dbReference type="InterPro" id="IPR003785">
    <property type="entry name" value="Creatininase/forma_Hydrolase"/>
</dbReference>
<dbReference type="InterPro" id="IPR024901">
    <property type="entry name" value="FAPy_deformylase"/>
</dbReference>
<dbReference type="NCBIfam" id="NF033501">
    <property type="entry name" value="ArfB_arch_rifla"/>
    <property type="match status" value="1"/>
</dbReference>
<dbReference type="PANTHER" id="PTHR35005:SF1">
    <property type="entry name" value="2-AMINO-5-FORMYLAMINO-6-RIBOSYLAMINOPYRIMIDIN-4(3H)-ONE 5'-MONOPHOSPHATE DEFORMYLASE"/>
    <property type="match status" value="1"/>
</dbReference>
<dbReference type="PANTHER" id="PTHR35005">
    <property type="entry name" value="3-DEHYDRO-SCYLLO-INOSOSE HYDROLASE"/>
    <property type="match status" value="1"/>
</dbReference>
<dbReference type="Pfam" id="PF02633">
    <property type="entry name" value="Creatininase"/>
    <property type="match status" value="1"/>
</dbReference>
<dbReference type="SUPFAM" id="SSF102215">
    <property type="entry name" value="Creatininase"/>
    <property type="match status" value="1"/>
</dbReference>
<gene>
    <name evidence="2" type="primary">arfB</name>
    <name type="ordered locus">mru_1283</name>
</gene>
<sequence>MVELRVNAGNVKNPNVHKIGIIALGSHLENHGPALPIDTDAKIASHIAFQASLESGAKFLGVIYPAHELKEINHGIHVSLEDLTDEIVKVLKSAKKFLRISSVIIVNGHGGNLPIVTTLYDIEERTGLLITLNSKIIESEGPHGGSGELSMAKALGIIDESQVENQTNLEEYGEVGLYMFGEARRNDPNIEEGALDVEENGVYVDDVYGQELLKLAINSVLLDVEKQLDSHYGY</sequence>
<proteinExistence type="inferred from homology"/>
<organism>
    <name type="scientific">Methanobrevibacter ruminantium (strain ATCC 35063 / DSM 1093 / JCM 13430 / OCM 146 / M1)</name>
    <name type="common">Methanobacterium ruminantium</name>
    <dbReference type="NCBI Taxonomy" id="634498"/>
    <lineage>
        <taxon>Archaea</taxon>
        <taxon>Methanobacteriati</taxon>
        <taxon>Methanobacteriota</taxon>
        <taxon>Methanomada group</taxon>
        <taxon>Methanobacteria</taxon>
        <taxon>Methanobacteriales</taxon>
        <taxon>Methanobacteriaceae</taxon>
        <taxon>Methanobrevibacter</taxon>
    </lineage>
</organism>
<feature type="chain" id="PRO_0000406918" description="2-amino-5-formylamino-6-ribosylaminopyrimidin-4(3H)-one 5'-monophosphate deformylase">
    <location>
        <begin position="1"/>
        <end position="234"/>
    </location>
</feature>
<feature type="binding site" evidence="2">
    <location>
        <position position="29"/>
    </location>
    <ligand>
        <name>Fe cation</name>
        <dbReference type="ChEBI" id="CHEBI:24875"/>
        <label>1</label>
    </ligand>
</feature>
<feature type="binding site" evidence="2">
    <location>
        <position position="31"/>
    </location>
    <ligand>
        <name>Fe cation</name>
        <dbReference type="ChEBI" id="CHEBI:24875"/>
        <label>2</label>
    </ligand>
</feature>
<feature type="binding site" evidence="2">
    <location>
        <position position="40"/>
    </location>
    <ligand>
        <name>Fe cation</name>
        <dbReference type="ChEBI" id="CHEBI:24875"/>
        <label>1</label>
    </ligand>
</feature>
<feature type="binding site" evidence="2">
    <location>
        <position position="40"/>
    </location>
    <ligand>
        <name>Fe cation</name>
        <dbReference type="ChEBI" id="CHEBI:24875"/>
        <label>2</label>
    </ligand>
</feature>
<feature type="binding site" evidence="2">
    <location>
        <position position="109"/>
    </location>
    <ligand>
        <name>Fe cation</name>
        <dbReference type="ChEBI" id="CHEBI:24875"/>
        <label>1</label>
    </ligand>
</feature>
<keyword id="KW-0378">Hydrolase</keyword>
<keyword id="KW-0408">Iron</keyword>
<keyword id="KW-0479">Metal-binding</keyword>
<keyword id="KW-0862">Zinc</keyword>
<reference key="1">
    <citation type="journal article" date="2010" name="PLoS ONE">
        <title>The genome sequence of the rumen methanogen Methanobrevibacter ruminantium reveals new possibilities for controlling ruminant methane emissions.</title>
        <authorList>
            <person name="Leahy S.C."/>
            <person name="Kelly W.J."/>
            <person name="Altermann E."/>
            <person name="Ronimus R.S."/>
            <person name="Yeoman C.J."/>
            <person name="Pacheco D.M."/>
            <person name="Li D."/>
            <person name="Kong Z."/>
            <person name="McTavish S."/>
            <person name="Sang C."/>
            <person name="Lambie S.C."/>
            <person name="Janssen P.H."/>
            <person name="Dey D."/>
            <person name="Attwood G.T."/>
        </authorList>
    </citation>
    <scope>NUCLEOTIDE SEQUENCE [LARGE SCALE GENOMIC DNA]</scope>
    <source>
        <strain>ATCC 35063 / DSM 1093 / JCM 13430 / OCM 146 / M1</strain>
    </source>
</reference>
<comment type="function">
    <text evidence="2">Catalyzes the hydrolysis of the formamide of 2-amino-5-formylamino-6-ribosylamino-4(3H)-pyrimidinone 5'-monophosphate (FAPy) to form 2,5-diamino-6-ribosylamino-4(3H)-pyrimidinone 5'-phosphate (APy).</text>
</comment>
<comment type="catalytic activity">
    <reaction evidence="2">
        <text>2-amino-5-formylamino-6-(5-phospho-D-ribosylamino)pyrimidin-4(3H)-one + H2O = 2,5-diamino-6-(1-D-ribosylamino)pyrimidin-4(3H)-one 5'-phosphate + formate + H(+)</text>
        <dbReference type="Rhea" id="RHEA:27282"/>
        <dbReference type="ChEBI" id="CHEBI:15377"/>
        <dbReference type="ChEBI" id="CHEBI:15378"/>
        <dbReference type="ChEBI" id="CHEBI:15740"/>
        <dbReference type="ChEBI" id="CHEBI:57258"/>
        <dbReference type="ChEBI" id="CHEBI:59545"/>
        <dbReference type="EC" id="3.5.1.102"/>
    </reaction>
</comment>
<comment type="cofactor">
    <cofactor evidence="1">
        <name>Fe(2+)</name>
        <dbReference type="ChEBI" id="CHEBI:29033"/>
    </cofactor>
    <text evidence="1">Requires one Fe(2+) ion for activity.</text>
</comment>
<comment type="cofactor">
    <cofactor evidence="1">
        <name>Fe(2+)</name>
        <dbReference type="ChEBI" id="CHEBI:29033"/>
    </cofactor>
    <cofactor evidence="1">
        <name>Zn(2+)</name>
        <dbReference type="ChEBI" id="CHEBI:29105"/>
    </cofactor>
    <text evidence="1">Requires an additional second metal ion that could be Fe(2+) or Zn(2+).</text>
</comment>
<comment type="pathway">
    <text evidence="2">Cofactor biosynthesis; coenzyme F420 biosynthesis.</text>
</comment>
<comment type="pathway">
    <text evidence="2">Cofactor biosynthesis; riboflavin biosynthesis.</text>
</comment>
<comment type="subunit">
    <text evidence="2">Homodimer.</text>
</comment>
<comment type="similarity">
    <text evidence="2">Belongs to the creatininase superfamily. FAPy deformylase family.</text>
</comment>